<organism>
    <name type="scientific">Listeria welshimeri serovar 6b (strain ATCC 35897 / DSM 20650 / CCUG 15529 / CIP 8149 / NCTC 11857 / SLCC 5334 / V8)</name>
    <dbReference type="NCBI Taxonomy" id="386043"/>
    <lineage>
        <taxon>Bacteria</taxon>
        <taxon>Bacillati</taxon>
        <taxon>Bacillota</taxon>
        <taxon>Bacilli</taxon>
        <taxon>Bacillales</taxon>
        <taxon>Listeriaceae</taxon>
        <taxon>Listeria</taxon>
    </lineage>
</organism>
<gene>
    <name evidence="2" type="primary">infB</name>
    <name type="ordered locus">lwe1340</name>
</gene>
<protein>
    <recommendedName>
        <fullName evidence="2">Translation initiation factor IF-2</fullName>
    </recommendedName>
</protein>
<evidence type="ECO:0000250" key="1"/>
<evidence type="ECO:0000255" key="2">
    <source>
        <dbReference type="HAMAP-Rule" id="MF_00100"/>
    </source>
</evidence>
<evidence type="ECO:0000256" key="3">
    <source>
        <dbReference type="SAM" id="MobiDB-lite"/>
    </source>
</evidence>
<name>IF2_LISW6</name>
<sequence>MSKVRVYEYAKEHQVSSKKVIEALKDLGIEVANHMSTINENALRQLDNAVDGTNKKAEAPKKETTSNENGNSKGPNKPNMTNSNEKSNKPNKPAGQATKPATANKSQGAKPATNKPANTSNQTQSSGNQQQAGGQKRNNNSNRPGGGNSNRPGGNNRPNRGGNFNNKGRNTKKKGKLNHSTVPPTPPKPKELPEKIVFSESLTVAELAKKLYREPSELIKKLFMLGVVATINQSLDKDAIELICDDYGVQVEEEIKVDVTDLDVYFENELNETVDESKLVERPPVVTIMGHVDHGKTTLLDSLRNTKVTLGEAGGITQHIGAYQLEIHDKKITFLDTPGHAAFTAMRARGAQITDITILVVAADDGVMPQTIEAINHAKAAGMPIIVAVNKIDKPQANPDRVMQELTEYELVPEAWGGDTIFAPISAKFGEGLENLLDMILLVSEVEELKANPNRRAIGSVIEAELDKGRGPVATLLVQDGTLNIGDPIVVGNTFGRVRAMVNDLGRRVKKVGPSTPVEITGLNDVPQAGDRFVVFEDEKTARNIGETRASRALVAQRSATNRVSLDNLFEHMKAGEMKEVNVIIKADVQGSVEALAASLRKIDVEGVNVKIIHTAVGAINESDITLAAASNAIVIGFNVRPTAQAREAAENESVDIRLHRVIYKAIDEIEAAMKGMLDPEFQEKIIGQAQVRQTINVSKVGTIAGCYVTDGKITRDSGVRIIRDGIVVFEGEIATLKRFKDDAKEVAKGYECGITVQNFNDIKEDDVIEAYVMEEIERK</sequence>
<feature type="chain" id="PRO_1000008265" description="Translation initiation factor IF-2">
    <location>
        <begin position="1"/>
        <end position="780"/>
    </location>
</feature>
<feature type="domain" description="tr-type G">
    <location>
        <begin position="281"/>
        <end position="450"/>
    </location>
</feature>
<feature type="region of interest" description="Disordered" evidence="3">
    <location>
        <begin position="44"/>
        <end position="194"/>
    </location>
</feature>
<feature type="region of interest" description="G1" evidence="1">
    <location>
        <begin position="290"/>
        <end position="297"/>
    </location>
</feature>
<feature type="region of interest" description="G2" evidence="1">
    <location>
        <begin position="315"/>
        <end position="319"/>
    </location>
</feature>
<feature type="region of interest" description="G3" evidence="1">
    <location>
        <begin position="336"/>
        <end position="339"/>
    </location>
</feature>
<feature type="region of interest" description="G4" evidence="1">
    <location>
        <begin position="390"/>
        <end position="393"/>
    </location>
</feature>
<feature type="region of interest" description="G5" evidence="1">
    <location>
        <begin position="426"/>
        <end position="428"/>
    </location>
</feature>
<feature type="compositionally biased region" description="Basic and acidic residues" evidence="3">
    <location>
        <begin position="53"/>
        <end position="65"/>
    </location>
</feature>
<feature type="compositionally biased region" description="Polar residues" evidence="3">
    <location>
        <begin position="66"/>
        <end position="81"/>
    </location>
</feature>
<feature type="compositionally biased region" description="Low complexity" evidence="3">
    <location>
        <begin position="82"/>
        <end position="93"/>
    </location>
</feature>
<feature type="compositionally biased region" description="Low complexity" evidence="3">
    <location>
        <begin position="117"/>
        <end position="168"/>
    </location>
</feature>
<feature type="binding site" evidence="2">
    <location>
        <begin position="290"/>
        <end position="297"/>
    </location>
    <ligand>
        <name>GTP</name>
        <dbReference type="ChEBI" id="CHEBI:37565"/>
    </ligand>
</feature>
<feature type="binding site" evidence="2">
    <location>
        <begin position="336"/>
        <end position="340"/>
    </location>
    <ligand>
        <name>GTP</name>
        <dbReference type="ChEBI" id="CHEBI:37565"/>
    </ligand>
</feature>
<feature type="binding site" evidence="2">
    <location>
        <begin position="390"/>
        <end position="393"/>
    </location>
    <ligand>
        <name>GTP</name>
        <dbReference type="ChEBI" id="CHEBI:37565"/>
    </ligand>
</feature>
<proteinExistence type="inferred from homology"/>
<reference key="1">
    <citation type="journal article" date="2006" name="J. Bacteriol.">
        <title>Whole-genome sequence of Listeria welshimeri reveals common steps in genome reduction with Listeria innocua as compared to Listeria monocytogenes.</title>
        <authorList>
            <person name="Hain T."/>
            <person name="Steinweg C."/>
            <person name="Kuenne C.T."/>
            <person name="Billion A."/>
            <person name="Ghai R."/>
            <person name="Chatterjee S.S."/>
            <person name="Domann E."/>
            <person name="Kaerst U."/>
            <person name="Goesmann A."/>
            <person name="Bekel T."/>
            <person name="Bartels D."/>
            <person name="Kaiser O."/>
            <person name="Meyer F."/>
            <person name="Puehler A."/>
            <person name="Weisshaar B."/>
            <person name="Wehland J."/>
            <person name="Liang C."/>
            <person name="Dandekar T."/>
            <person name="Lampidis R."/>
            <person name="Kreft J."/>
            <person name="Goebel W."/>
            <person name="Chakraborty T."/>
        </authorList>
    </citation>
    <scope>NUCLEOTIDE SEQUENCE [LARGE SCALE GENOMIC DNA]</scope>
    <source>
        <strain>ATCC 35897 / DSM 20650 / CCUG 15529 / CIP 8149 / NCTC 11857 / SLCC 5334 / V8</strain>
    </source>
</reference>
<dbReference type="EMBL" id="AM263198">
    <property type="protein sequence ID" value="CAK20758.1"/>
    <property type="molecule type" value="Genomic_DNA"/>
</dbReference>
<dbReference type="RefSeq" id="WP_011702142.1">
    <property type="nucleotide sequence ID" value="NC_008555.1"/>
</dbReference>
<dbReference type="SMR" id="A0AIC6"/>
<dbReference type="STRING" id="386043.lwe1340"/>
<dbReference type="GeneID" id="61189217"/>
<dbReference type="KEGG" id="lwe:lwe1340"/>
<dbReference type="eggNOG" id="COG0532">
    <property type="taxonomic scope" value="Bacteria"/>
</dbReference>
<dbReference type="HOGENOM" id="CLU_006301_5_1_9"/>
<dbReference type="OrthoDB" id="9811804at2"/>
<dbReference type="Proteomes" id="UP000000779">
    <property type="component" value="Chromosome"/>
</dbReference>
<dbReference type="GO" id="GO:0005829">
    <property type="term" value="C:cytosol"/>
    <property type="evidence" value="ECO:0007669"/>
    <property type="project" value="TreeGrafter"/>
</dbReference>
<dbReference type="GO" id="GO:0005525">
    <property type="term" value="F:GTP binding"/>
    <property type="evidence" value="ECO:0007669"/>
    <property type="project" value="UniProtKB-KW"/>
</dbReference>
<dbReference type="GO" id="GO:0003924">
    <property type="term" value="F:GTPase activity"/>
    <property type="evidence" value="ECO:0007669"/>
    <property type="project" value="UniProtKB-UniRule"/>
</dbReference>
<dbReference type="GO" id="GO:0003743">
    <property type="term" value="F:translation initiation factor activity"/>
    <property type="evidence" value="ECO:0007669"/>
    <property type="project" value="UniProtKB-UniRule"/>
</dbReference>
<dbReference type="CDD" id="cd01887">
    <property type="entry name" value="IF2_eIF5B"/>
    <property type="match status" value="1"/>
</dbReference>
<dbReference type="CDD" id="cd03702">
    <property type="entry name" value="IF2_mtIF2_II"/>
    <property type="match status" value="1"/>
</dbReference>
<dbReference type="CDD" id="cd03692">
    <property type="entry name" value="mtIF2_IVc"/>
    <property type="match status" value="1"/>
</dbReference>
<dbReference type="FunFam" id="2.40.30.10:FF:000007">
    <property type="entry name" value="Translation initiation factor IF-2"/>
    <property type="match status" value="1"/>
</dbReference>
<dbReference type="FunFam" id="2.40.30.10:FF:000008">
    <property type="entry name" value="Translation initiation factor IF-2"/>
    <property type="match status" value="1"/>
</dbReference>
<dbReference type="FunFam" id="3.40.50.10050:FF:000001">
    <property type="entry name" value="Translation initiation factor IF-2"/>
    <property type="match status" value="1"/>
</dbReference>
<dbReference type="FunFam" id="3.40.50.300:FF:000019">
    <property type="entry name" value="Translation initiation factor IF-2"/>
    <property type="match status" value="1"/>
</dbReference>
<dbReference type="Gene3D" id="1.10.10.2480">
    <property type="match status" value="1"/>
</dbReference>
<dbReference type="Gene3D" id="3.40.50.300">
    <property type="entry name" value="P-loop containing nucleotide triphosphate hydrolases"/>
    <property type="match status" value="1"/>
</dbReference>
<dbReference type="Gene3D" id="2.40.30.10">
    <property type="entry name" value="Translation factors"/>
    <property type="match status" value="2"/>
</dbReference>
<dbReference type="Gene3D" id="3.40.50.10050">
    <property type="entry name" value="Translation initiation factor IF- 2, domain 3"/>
    <property type="match status" value="1"/>
</dbReference>
<dbReference type="HAMAP" id="MF_00100_B">
    <property type="entry name" value="IF_2_B"/>
    <property type="match status" value="1"/>
</dbReference>
<dbReference type="InterPro" id="IPR053905">
    <property type="entry name" value="EF-G-like_DII"/>
</dbReference>
<dbReference type="InterPro" id="IPR044145">
    <property type="entry name" value="IF2_II"/>
</dbReference>
<dbReference type="InterPro" id="IPR006847">
    <property type="entry name" value="IF2_N"/>
</dbReference>
<dbReference type="InterPro" id="IPR027417">
    <property type="entry name" value="P-loop_NTPase"/>
</dbReference>
<dbReference type="InterPro" id="IPR005225">
    <property type="entry name" value="Small_GTP-bd"/>
</dbReference>
<dbReference type="InterPro" id="IPR000795">
    <property type="entry name" value="T_Tr_GTP-bd_dom"/>
</dbReference>
<dbReference type="InterPro" id="IPR000178">
    <property type="entry name" value="TF_IF2_bacterial-like"/>
</dbReference>
<dbReference type="InterPro" id="IPR015760">
    <property type="entry name" value="TIF_IF2"/>
</dbReference>
<dbReference type="InterPro" id="IPR023115">
    <property type="entry name" value="TIF_IF2_dom3"/>
</dbReference>
<dbReference type="InterPro" id="IPR036925">
    <property type="entry name" value="TIF_IF2_dom3_sf"/>
</dbReference>
<dbReference type="InterPro" id="IPR009000">
    <property type="entry name" value="Transl_B-barrel_sf"/>
</dbReference>
<dbReference type="NCBIfam" id="TIGR00487">
    <property type="entry name" value="IF-2"/>
    <property type="match status" value="1"/>
</dbReference>
<dbReference type="NCBIfam" id="TIGR00231">
    <property type="entry name" value="small_GTP"/>
    <property type="match status" value="1"/>
</dbReference>
<dbReference type="PANTHER" id="PTHR43381:SF5">
    <property type="entry name" value="TR-TYPE G DOMAIN-CONTAINING PROTEIN"/>
    <property type="match status" value="1"/>
</dbReference>
<dbReference type="PANTHER" id="PTHR43381">
    <property type="entry name" value="TRANSLATION INITIATION FACTOR IF-2-RELATED"/>
    <property type="match status" value="1"/>
</dbReference>
<dbReference type="Pfam" id="PF22042">
    <property type="entry name" value="EF-G_D2"/>
    <property type="match status" value="1"/>
</dbReference>
<dbReference type="Pfam" id="PF00009">
    <property type="entry name" value="GTP_EFTU"/>
    <property type="match status" value="1"/>
</dbReference>
<dbReference type="Pfam" id="PF11987">
    <property type="entry name" value="IF-2"/>
    <property type="match status" value="1"/>
</dbReference>
<dbReference type="Pfam" id="PF04760">
    <property type="entry name" value="IF2_N"/>
    <property type="match status" value="2"/>
</dbReference>
<dbReference type="SUPFAM" id="SSF52156">
    <property type="entry name" value="Initiation factor IF2/eIF5b, domain 3"/>
    <property type="match status" value="1"/>
</dbReference>
<dbReference type="SUPFAM" id="SSF52540">
    <property type="entry name" value="P-loop containing nucleoside triphosphate hydrolases"/>
    <property type="match status" value="1"/>
</dbReference>
<dbReference type="SUPFAM" id="SSF50447">
    <property type="entry name" value="Translation proteins"/>
    <property type="match status" value="2"/>
</dbReference>
<dbReference type="PROSITE" id="PS51722">
    <property type="entry name" value="G_TR_2"/>
    <property type="match status" value="1"/>
</dbReference>
<dbReference type="PROSITE" id="PS01176">
    <property type="entry name" value="IF2"/>
    <property type="match status" value="1"/>
</dbReference>
<keyword id="KW-0963">Cytoplasm</keyword>
<keyword id="KW-0342">GTP-binding</keyword>
<keyword id="KW-0396">Initiation factor</keyword>
<keyword id="KW-0547">Nucleotide-binding</keyword>
<keyword id="KW-0648">Protein biosynthesis</keyword>
<comment type="function">
    <text evidence="2">One of the essential components for the initiation of protein synthesis. Protects formylmethionyl-tRNA from spontaneous hydrolysis and promotes its binding to the 30S ribosomal subunits. Also involved in the hydrolysis of GTP during the formation of the 70S ribosomal complex.</text>
</comment>
<comment type="subcellular location">
    <subcellularLocation>
        <location evidence="2">Cytoplasm</location>
    </subcellularLocation>
</comment>
<comment type="similarity">
    <text evidence="2">Belongs to the TRAFAC class translation factor GTPase superfamily. Classic translation factor GTPase family. IF-2 subfamily.</text>
</comment>
<accession>A0AIC6</accession>